<gene>
    <name evidence="1" type="primary">dxs</name>
    <name type="ordered locus">AZC_3111</name>
</gene>
<sequence length="641" mass="68121">MTVTKTPLLDTVRDASDVRRLPEEKLSQLADELRAETISAVSVTGGHLGAGLGVVELTVALHHVFNTPHDRLIWDVGHQCYPHKILTGRRDRIRTLRQGGGLSGFTRRSESEYDPFGAAHSSTSISAGLGMAVARDLSGGDRNVIAVIGDGAMSAGMAYEAMNNAGAMDSRLIVILNDNDMSIAPPTGAMSAYLARLISGRTYLSLREIGKQLAGHLPKFVKDGAAKAEEFARGFWTGGTLFEEMGFYYVGPIDGHNLEHLLPVLKNVRDAKTGPILVHVVTQKGKGYPPAEASADKYHGVVKFDVVTGAQVKAKSNAPSYTRVFAETLIDEARRDDKVVAITAAMPSGTGLDLFGQAFPQRTFDVGIAEQHAVTFAAGLAAEGYRPFCALYSTFLQRGYDQVVHDVALQGLPVRFAIDRAGLVGADGATHAGAFDLAMLTCLPGFTVMAPADEAELTHMIATAVGHDAGPIAFRFPRGEGVGVERPEKGERLPIGKGRVVREGQDIAFLSLGTRLAACLDVAERLSSLGISATVADARFAKPIDRELIAHLARTHAALVVVEEGSVGGFGSQVLQFLSDEGLMDGGLKVRALTLPDTYIDHDTPAAQLAEAGLDADGIYKRALALVQPAERRGAVATKRA</sequence>
<protein>
    <recommendedName>
        <fullName evidence="1">1-deoxy-D-xylulose-5-phosphate synthase</fullName>
        <ecNumber evidence="1">2.2.1.7</ecNumber>
    </recommendedName>
    <alternativeName>
        <fullName evidence="1">1-deoxyxylulose-5-phosphate synthase</fullName>
        <shortName evidence="1">DXP synthase</shortName>
        <shortName evidence="1">DXPS</shortName>
    </alternativeName>
</protein>
<accession>A8IBS1</accession>
<evidence type="ECO:0000255" key="1">
    <source>
        <dbReference type="HAMAP-Rule" id="MF_00315"/>
    </source>
</evidence>
<comment type="function">
    <text evidence="1">Catalyzes the acyloin condensation reaction between C atoms 2 and 3 of pyruvate and glyceraldehyde 3-phosphate to yield 1-deoxy-D-xylulose-5-phosphate (DXP).</text>
</comment>
<comment type="catalytic activity">
    <reaction evidence="1">
        <text>D-glyceraldehyde 3-phosphate + pyruvate + H(+) = 1-deoxy-D-xylulose 5-phosphate + CO2</text>
        <dbReference type="Rhea" id="RHEA:12605"/>
        <dbReference type="ChEBI" id="CHEBI:15361"/>
        <dbReference type="ChEBI" id="CHEBI:15378"/>
        <dbReference type="ChEBI" id="CHEBI:16526"/>
        <dbReference type="ChEBI" id="CHEBI:57792"/>
        <dbReference type="ChEBI" id="CHEBI:59776"/>
        <dbReference type="EC" id="2.2.1.7"/>
    </reaction>
</comment>
<comment type="cofactor">
    <cofactor evidence="1">
        <name>Mg(2+)</name>
        <dbReference type="ChEBI" id="CHEBI:18420"/>
    </cofactor>
    <text evidence="1">Binds 1 Mg(2+) ion per subunit.</text>
</comment>
<comment type="cofactor">
    <cofactor evidence="1">
        <name>thiamine diphosphate</name>
        <dbReference type="ChEBI" id="CHEBI:58937"/>
    </cofactor>
    <text evidence="1">Binds 1 thiamine pyrophosphate per subunit.</text>
</comment>
<comment type="pathway">
    <text evidence="1">Metabolic intermediate biosynthesis; 1-deoxy-D-xylulose 5-phosphate biosynthesis; 1-deoxy-D-xylulose 5-phosphate from D-glyceraldehyde 3-phosphate and pyruvate: step 1/1.</text>
</comment>
<comment type="subunit">
    <text evidence="1">Homodimer.</text>
</comment>
<comment type="similarity">
    <text evidence="1">Belongs to the transketolase family. DXPS subfamily.</text>
</comment>
<proteinExistence type="inferred from homology"/>
<keyword id="KW-0414">Isoprene biosynthesis</keyword>
<keyword id="KW-0460">Magnesium</keyword>
<keyword id="KW-0479">Metal-binding</keyword>
<keyword id="KW-1185">Reference proteome</keyword>
<keyword id="KW-0784">Thiamine biosynthesis</keyword>
<keyword id="KW-0786">Thiamine pyrophosphate</keyword>
<keyword id="KW-0808">Transferase</keyword>
<name>DXS_AZOC5</name>
<organism>
    <name type="scientific">Azorhizobium caulinodans (strain ATCC 43989 / DSM 5975 / JCM 20966 / LMG 6465 / NBRC 14845 / NCIMB 13405 / ORS 571)</name>
    <dbReference type="NCBI Taxonomy" id="438753"/>
    <lineage>
        <taxon>Bacteria</taxon>
        <taxon>Pseudomonadati</taxon>
        <taxon>Pseudomonadota</taxon>
        <taxon>Alphaproteobacteria</taxon>
        <taxon>Hyphomicrobiales</taxon>
        <taxon>Xanthobacteraceae</taxon>
        <taxon>Azorhizobium</taxon>
    </lineage>
</organism>
<feature type="chain" id="PRO_1000071993" description="1-deoxy-D-xylulose-5-phosphate synthase">
    <location>
        <begin position="1"/>
        <end position="641"/>
    </location>
</feature>
<feature type="binding site" evidence="1">
    <location>
        <position position="78"/>
    </location>
    <ligand>
        <name>thiamine diphosphate</name>
        <dbReference type="ChEBI" id="CHEBI:58937"/>
    </ligand>
</feature>
<feature type="binding site" evidence="1">
    <location>
        <begin position="119"/>
        <end position="121"/>
    </location>
    <ligand>
        <name>thiamine diphosphate</name>
        <dbReference type="ChEBI" id="CHEBI:58937"/>
    </ligand>
</feature>
<feature type="binding site" evidence="1">
    <location>
        <position position="150"/>
    </location>
    <ligand>
        <name>Mg(2+)</name>
        <dbReference type="ChEBI" id="CHEBI:18420"/>
    </ligand>
</feature>
<feature type="binding site" evidence="1">
    <location>
        <begin position="151"/>
        <end position="152"/>
    </location>
    <ligand>
        <name>thiamine diphosphate</name>
        <dbReference type="ChEBI" id="CHEBI:58937"/>
    </ligand>
</feature>
<feature type="binding site" evidence="1">
    <location>
        <position position="179"/>
    </location>
    <ligand>
        <name>Mg(2+)</name>
        <dbReference type="ChEBI" id="CHEBI:18420"/>
    </ligand>
</feature>
<feature type="binding site" evidence="1">
    <location>
        <position position="179"/>
    </location>
    <ligand>
        <name>thiamine diphosphate</name>
        <dbReference type="ChEBI" id="CHEBI:58937"/>
    </ligand>
</feature>
<feature type="binding site" evidence="1">
    <location>
        <position position="288"/>
    </location>
    <ligand>
        <name>thiamine diphosphate</name>
        <dbReference type="ChEBI" id="CHEBI:58937"/>
    </ligand>
</feature>
<feature type="binding site" evidence="1">
    <location>
        <position position="370"/>
    </location>
    <ligand>
        <name>thiamine diphosphate</name>
        <dbReference type="ChEBI" id="CHEBI:58937"/>
    </ligand>
</feature>
<reference key="1">
    <citation type="submission" date="2007-04" db="EMBL/GenBank/DDBJ databases">
        <title>Complete genome sequence of the nitrogen-fixing bacterium Azorhizobium caulinodans ORS571.</title>
        <authorList>
            <person name="Lee K.B."/>
            <person name="Backer P.D."/>
            <person name="Aono T."/>
            <person name="Liu C.T."/>
            <person name="Suzuki S."/>
            <person name="Suzuki T."/>
            <person name="Kaneko T."/>
            <person name="Yamada M."/>
            <person name="Tabata S."/>
            <person name="Kupfer D.M."/>
            <person name="Najar F.Z."/>
            <person name="Wiley G.B."/>
            <person name="Roe B."/>
            <person name="Binnewies T."/>
            <person name="Ussery D."/>
            <person name="Vereecke D."/>
            <person name="Gevers D."/>
            <person name="Holsters M."/>
            <person name="Oyaizu H."/>
        </authorList>
    </citation>
    <scope>NUCLEOTIDE SEQUENCE [LARGE SCALE GENOMIC DNA]</scope>
    <source>
        <strain>ATCC 43989 / DSM 5975 / JCM 20966 / LMG 6465 / NBRC 14845 / NCIMB 13405 / ORS 571</strain>
    </source>
</reference>
<dbReference type="EC" id="2.2.1.7" evidence="1"/>
<dbReference type="EMBL" id="AP009384">
    <property type="protein sequence ID" value="BAF89109.1"/>
    <property type="molecule type" value="Genomic_DNA"/>
</dbReference>
<dbReference type="RefSeq" id="WP_012171635.1">
    <property type="nucleotide sequence ID" value="NC_009937.1"/>
</dbReference>
<dbReference type="SMR" id="A8IBS1"/>
<dbReference type="STRING" id="438753.AZC_3111"/>
<dbReference type="KEGG" id="azc:AZC_3111"/>
<dbReference type="eggNOG" id="COG1154">
    <property type="taxonomic scope" value="Bacteria"/>
</dbReference>
<dbReference type="HOGENOM" id="CLU_009227_1_4_5"/>
<dbReference type="UniPathway" id="UPA00064">
    <property type="reaction ID" value="UER00091"/>
</dbReference>
<dbReference type="Proteomes" id="UP000000270">
    <property type="component" value="Chromosome"/>
</dbReference>
<dbReference type="GO" id="GO:0008661">
    <property type="term" value="F:1-deoxy-D-xylulose-5-phosphate synthase activity"/>
    <property type="evidence" value="ECO:0007669"/>
    <property type="project" value="UniProtKB-UniRule"/>
</dbReference>
<dbReference type="GO" id="GO:0000287">
    <property type="term" value="F:magnesium ion binding"/>
    <property type="evidence" value="ECO:0007669"/>
    <property type="project" value="UniProtKB-UniRule"/>
</dbReference>
<dbReference type="GO" id="GO:0030976">
    <property type="term" value="F:thiamine pyrophosphate binding"/>
    <property type="evidence" value="ECO:0007669"/>
    <property type="project" value="UniProtKB-UniRule"/>
</dbReference>
<dbReference type="GO" id="GO:0052865">
    <property type="term" value="P:1-deoxy-D-xylulose 5-phosphate biosynthetic process"/>
    <property type="evidence" value="ECO:0007669"/>
    <property type="project" value="UniProtKB-UniPathway"/>
</dbReference>
<dbReference type="GO" id="GO:0019682">
    <property type="term" value="P:glyceraldehyde-3-phosphate metabolic process"/>
    <property type="evidence" value="ECO:0007669"/>
    <property type="project" value="UniProtKB-ARBA"/>
</dbReference>
<dbReference type="GO" id="GO:0016114">
    <property type="term" value="P:terpenoid biosynthetic process"/>
    <property type="evidence" value="ECO:0007669"/>
    <property type="project" value="UniProtKB-UniRule"/>
</dbReference>
<dbReference type="GO" id="GO:0009228">
    <property type="term" value="P:thiamine biosynthetic process"/>
    <property type="evidence" value="ECO:0007669"/>
    <property type="project" value="UniProtKB-UniRule"/>
</dbReference>
<dbReference type="CDD" id="cd02007">
    <property type="entry name" value="TPP_DXS"/>
    <property type="match status" value="1"/>
</dbReference>
<dbReference type="CDD" id="cd07033">
    <property type="entry name" value="TPP_PYR_DXS_TK_like"/>
    <property type="match status" value="1"/>
</dbReference>
<dbReference type="FunFam" id="3.40.50.920:FF:000002">
    <property type="entry name" value="1-deoxy-D-xylulose-5-phosphate synthase"/>
    <property type="match status" value="1"/>
</dbReference>
<dbReference type="FunFam" id="3.40.50.970:FF:000005">
    <property type="entry name" value="1-deoxy-D-xylulose-5-phosphate synthase"/>
    <property type="match status" value="1"/>
</dbReference>
<dbReference type="Gene3D" id="3.40.50.920">
    <property type="match status" value="1"/>
</dbReference>
<dbReference type="Gene3D" id="3.40.50.970">
    <property type="match status" value="2"/>
</dbReference>
<dbReference type="HAMAP" id="MF_00315">
    <property type="entry name" value="DXP_synth"/>
    <property type="match status" value="1"/>
</dbReference>
<dbReference type="InterPro" id="IPR005477">
    <property type="entry name" value="Dxylulose-5-P_synthase"/>
</dbReference>
<dbReference type="InterPro" id="IPR029061">
    <property type="entry name" value="THDP-binding"/>
</dbReference>
<dbReference type="InterPro" id="IPR009014">
    <property type="entry name" value="Transketo_C/PFOR_II"/>
</dbReference>
<dbReference type="InterPro" id="IPR005475">
    <property type="entry name" value="Transketolase-like_Pyr-bd"/>
</dbReference>
<dbReference type="InterPro" id="IPR033248">
    <property type="entry name" value="Transketolase_C"/>
</dbReference>
<dbReference type="InterPro" id="IPR049557">
    <property type="entry name" value="Transketolase_CS"/>
</dbReference>
<dbReference type="NCBIfam" id="TIGR00204">
    <property type="entry name" value="dxs"/>
    <property type="match status" value="1"/>
</dbReference>
<dbReference type="NCBIfam" id="NF003933">
    <property type="entry name" value="PRK05444.2-2"/>
    <property type="match status" value="1"/>
</dbReference>
<dbReference type="PANTHER" id="PTHR43322">
    <property type="entry name" value="1-D-DEOXYXYLULOSE 5-PHOSPHATE SYNTHASE-RELATED"/>
    <property type="match status" value="1"/>
</dbReference>
<dbReference type="PANTHER" id="PTHR43322:SF5">
    <property type="entry name" value="1-DEOXY-D-XYLULOSE-5-PHOSPHATE SYNTHASE, CHLOROPLASTIC"/>
    <property type="match status" value="1"/>
</dbReference>
<dbReference type="Pfam" id="PF13292">
    <property type="entry name" value="DXP_synthase_N"/>
    <property type="match status" value="1"/>
</dbReference>
<dbReference type="Pfam" id="PF02779">
    <property type="entry name" value="Transket_pyr"/>
    <property type="match status" value="1"/>
</dbReference>
<dbReference type="Pfam" id="PF02780">
    <property type="entry name" value="Transketolase_C"/>
    <property type="match status" value="1"/>
</dbReference>
<dbReference type="SMART" id="SM00861">
    <property type="entry name" value="Transket_pyr"/>
    <property type="match status" value="1"/>
</dbReference>
<dbReference type="SUPFAM" id="SSF52518">
    <property type="entry name" value="Thiamin diphosphate-binding fold (THDP-binding)"/>
    <property type="match status" value="2"/>
</dbReference>
<dbReference type="SUPFAM" id="SSF52922">
    <property type="entry name" value="TK C-terminal domain-like"/>
    <property type="match status" value="1"/>
</dbReference>
<dbReference type="PROSITE" id="PS00801">
    <property type="entry name" value="TRANSKETOLASE_1"/>
    <property type="match status" value="1"/>
</dbReference>